<dbReference type="EMBL" id="AF282251">
    <property type="protein sequence ID" value="AAK15156.1"/>
    <property type="status" value="ALT_INIT"/>
    <property type="molecule type" value="mRNA"/>
</dbReference>
<dbReference type="EMBL" id="AB041539">
    <property type="protein sequence ID" value="BAA95024.1"/>
    <property type="molecule type" value="mRNA"/>
</dbReference>
<dbReference type="EMBL" id="AC169670">
    <property type="status" value="NOT_ANNOTATED_CDS"/>
    <property type="molecule type" value="Genomic_DNA"/>
</dbReference>
<dbReference type="EMBL" id="AC113029">
    <property type="status" value="NOT_ANNOTATED_CDS"/>
    <property type="molecule type" value="Genomic_DNA"/>
</dbReference>
<dbReference type="EMBL" id="AC120437">
    <property type="status" value="NOT_ANNOTATED_CDS"/>
    <property type="molecule type" value="Genomic_DNA"/>
</dbReference>
<dbReference type="EMBL" id="AC142405">
    <property type="status" value="NOT_ANNOTATED_CDS"/>
    <property type="molecule type" value="Genomic_DNA"/>
</dbReference>
<dbReference type="EMBL" id="AC156620">
    <property type="status" value="NOT_ANNOTATED_CDS"/>
    <property type="molecule type" value="Genomic_DNA"/>
</dbReference>
<dbReference type="EMBL" id="BC057129">
    <property type="protein sequence ID" value="AAH57129.1"/>
    <property type="molecule type" value="mRNA"/>
</dbReference>
<dbReference type="EMBL" id="BC058963">
    <property type="protein sequence ID" value="AAH58963.1"/>
    <property type="molecule type" value="mRNA"/>
</dbReference>
<dbReference type="CCDS" id="CCDS19714.1">
    <molecule id="Q9JJG7-2"/>
</dbReference>
<dbReference type="CCDS" id="CCDS51656.1">
    <molecule id="Q9JJG7-1"/>
</dbReference>
<dbReference type="RefSeq" id="NP_067346.1">
    <molecule id="Q9JJG7-2"/>
    <property type="nucleotide sequence ID" value="NM_021371.2"/>
</dbReference>
<dbReference type="RefSeq" id="NP_851388.1">
    <molecule id="Q9JJG7-1"/>
    <property type="nucleotide sequence ID" value="NM_181045.2"/>
</dbReference>
<dbReference type="RefSeq" id="XP_006504435.1">
    <molecule id="Q9JJG7-1"/>
    <property type="nucleotide sequence ID" value="XM_006504372.5"/>
</dbReference>
<dbReference type="RefSeq" id="XP_006504436.1">
    <molecule id="Q9JJG7-2"/>
    <property type="nucleotide sequence ID" value="XM_006504373.3"/>
</dbReference>
<dbReference type="RefSeq" id="XP_006504437.1">
    <molecule id="Q9JJG7-2"/>
    <property type="nucleotide sequence ID" value="XM_006504374.2"/>
</dbReference>
<dbReference type="RefSeq" id="XP_036020679.1">
    <molecule id="Q9JJG7-1"/>
    <property type="nucleotide sequence ID" value="XM_036164786.1"/>
</dbReference>
<dbReference type="SMR" id="Q9JJG7"/>
<dbReference type="FunCoup" id="Q9JJG7">
    <property type="interactions" value="81"/>
</dbReference>
<dbReference type="IntAct" id="Q9JJG7">
    <property type="interactions" value="1"/>
</dbReference>
<dbReference type="STRING" id="10090.ENSMUSP00000083193"/>
<dbReference type="iPTMnet" id="Q9JJG7"/>
<dbReference type="PhosphoSitePlus" id="Q9JJG7"/>
<dbReference type="PaxDb" id="10090-ENSMUSP00000083193"/>
<dbReference type="Antibodypedia" id="28332">
    <property type="antibodies" value="160 antibodies from 29 providers"/>
</dbReference>
<dbReference type="DNASU" id="140904"/>
<dbReference type="Ensembl" id="ENSMUST00000086029.10">
    <molecule id="Q9JJG7-1"/>
    <property type="protein sequence ID" value="ENSMUSP00000083193.4"/>
    <property type="gene ID" value="ENSMUSG00000060371.13"/>
</dbReference>
<dbReference type="Ensembl" id="ENSMUST00000111287.8">
    <molecule id="Q9JJG7-2"/>
    <property type="protein sequence ID" value="ENSMUSP00000106918.2"/>
    <property type="gene ID" value="ENSMUSG00000060371.13"/>
</dbReference>
<dbReference type="Ensembl" id="ENSMUST00000111288.4">
    <molecule id="Q9JJG7-2"/>
    <property type="protein sequence ID" value="ENSMUSP00000106919.3"/>
    <property type="gene ID" value="ENSMUSG00000060371.13"/>
</dbReference>
<dbReference type="GeneID" id="140904"/>
<dbReference type="KEGG" id="mmu:140904"/>
<dbReference type="UCSC" id="uc008zum.2">
    <property type="organism name" value="mouse"/>
</dbReference>
<dbReference type="UCSC" id="uc008zuo.2">
    <molecule id="Q9JJG7-1"/>
    <property type="organism name" value="mouse"/>
</dbReference>
<dbReference type="AGR" id="MGI:2155987"/>
<dbReference type="CTD" id="83698"/>
<dbReference type="MGI" id="MGI:2155987">
    <property type="gene designation" value="Caln1"/>
</dbReference>
<dbReference type="VEuPathDB" id="HostDB:ENSMUSG00000060371"/>
<dbReference type="eggNOG" id="KOG0027">
    <property type="taxonomic scope" value="Eukaryota"/>
</dbReference>
<dbReference type="GeneTree" id="ENSGT00940000159212"/>
<dbReference type="HOGENOM" id="CLU_106115_0_0_1"/>
<dbReference type="InParanoid" id="Q9JJG7"/>
<dbReference type="OMA" id="DMQRMTL"/>
<dbReference type="OrthoDB" id="26525at2759"/>
<dbReference type="PhylomeDB" id="Q9JJG7"/>
<dbReference type="TreeFam" id="TF331025"/>
<dbReference type="BioGRID-ORCS" id="140904">
    <property type="hits" value="2 hits in 77 CRISPR screens"/>
</dbReference>
<dbReference type="ChiTaRS" id="Caln1">
    <property type="organism name" value="mouse"/>
</dbReference>
<dbReference type="PRO" id="PR:Q9JJG7"/>
<dbReference type="Proteomes" id="UP000000589">
    <property type="component" value="Chromosome 5"/>
</dbReference>
<dbReference type="RNAct" id="Q9JJG7">
    <property type="molecule type" value="protein"/>
</dbReference>
<dbReference type="Bgee" id="ENSMUSG00000060371">
    <property type="expression patterns" value="Expressed in nucleus accumbens and 104 other cell types or tissues"/>
</dbReference>
<dbReference type="ExpressionAtlas" id="Q9JJG7">
    <property type="expression patterns" value="baseline and differential"/>
</dbReference>
<dbReference type="GO" id="GO:0048471">
    <property type="term" value="C:perinuclear region of cytoplasm"/>
    <property type="evidence" value="ECO:0007669"/>
    <property type="project" value="UniProtKB-SubCell"/>
</dbReference>
<dbReference type="GO" id="GO:0005886">
    <property type="term" value="C:plasma membrane"/>
    <property type="evidence" value="ECO:0007669"/>
    <property type="project" value="UniProtKB-SubCell"/>
</dbReference>
<dbReference type="GO" id="GO:0032588">
    <property type="term" value="C:trans-Golgi network membrane"/>
    <property type="evidence" value="ECO:0000314"/>
    <property type="project" value="MGI"/>
</dbReference>
<dbReference type="GO" id="GO:0005509">
    <property type="term" value="F:calcium ion binding"/>
    <property type="evidence" value="ECO:0007669"/>
    <property type="project" value="InterPro"/>
</dbReference>
<dbReference type="CDD" id="cd00051">
    <property type="entry name" value="EFh"/>
    <property type="match status" value="1"/>
</dbReference>
<dbReference type="FunFam" id="1.10.238.10:FF:000115">
    <property type="entry name" value="Calcium-binding protein 8"/>
    <property type="match status" value="1"/>
</dbReference>
<dbReference type="Gene3D" id="1.10.238.10">
    <property type="entry name" value="EF-hand"/>
    <property type="match status" value="1"/>
</dbReference>
<dbReference type="InterPro" id="IPR051111">
    <property type="entry name" value="Ca-binding_regulatory"/>
</dbReference>
<dbReference type="InterPro" id="IPR011992">
    <property type="entry name" value="EF-hand-dom_pair"/>
</dbReference>
<dbReference type="InterPro" id="IPR018247">
    <property type="entry name" value="EF_Hand_1_Ca_BS"/>
</dbReference>
<dbReference type="InterPro" id="IPR002048">
    <property type="entry name" value="EF_hand_dom"/>
</dbReference>
<dbReference type="InterPro" id="IPR001751">
    <property type="entry name" value="S100/CaBP7/8-like_CS"/>
</dbReference>
<dbReference type="PANTHER" id="PTHR46311:SF3">
    <property type="entry name" value="CALCIUM-BINDING PROTEIN 8"/>
    <property type="match status" value="1"/>
</dbReference>
<dbReference type="PANTHER" id="PTHR46311">
    <property type="entry name" value="CALCIUM-BINDING PROTEIN 8-RELATED"/>
    <property type="match status" value="1"/>
</dbReference>
<dbReference type="Pfam" id="PF13499">
    <property type="entry name" value="EF-hand_7"/>
    <property type="match status" value="1"/>
</dbReference>
<dbReference type="SMART" id="SM00054">
    <property type="entry name" value="EFh"/>
    <property type="match status" value="2"/>
</dbReference>
<dbReference type="SUPFAM" id="SSF47473">
    <property type="entry name" value="EF-hand"/>
    <property type="match status" value="1"/>
</dbReference>
<dbReference type="PROSITE" id="PS00018">
    <property type="entry name" value="EF_HAND_1"/>
    <property type="match status" value="2"/>
</dbReference>
<dbReference type="PROSITE" id="PS50222">
    <property type="entry name" value="EF_HAND_2"/>
    <property type="match status" value="2"/>
</dbReference>
<evidence type="ECO:0000250" key="1">
    <source>
        <dbReference type="UniProtKB" id="Q06BI3"/>
    </source>
</evidence>
<evidence type="ECO:0000250" key="2">
    <source>
        <dbReference type="UniProtKB" id="Q9BXU9"/>
    </source>
</evidence>
<evidence type="ECO:0000255" key="3"/>
<evidence type="ECO:0000255" key="4">
    <source>
        <dbReference type="PROSITE-ProRule" id="PRU00448"/>
    </source>
</evidence>
<evidence type="ECO:0000256" key="5">
    <source>
        <dbReference type="SAM" id="MobiDB-lite"/>
    </source>
</evidence>
<evidence type="ECO:0000305" key="6"/>
<keyword id="KW-0025">Alternative splicing</keyword>
<keyword id="KW-0106">Calcium</keyword>
<keyword id="KW-1003">Cell membrane</keyword>
<keyword id="KW-0963">Cytoplasm</keyword>
<keyword id="KW-0333">Golgi apparatus</keyword>
<keyword id="KW-0472">Membrane</keyword>
<keyword id="KW-0479">Metal-binding</keyword>
<keyword id="KW-1185">Reference proteome</keyword>
<keyword id="KW-0677">Repeat</keyword>
<keyword id="KW-0812">Transmembrane</keyword>
<keyword id="KW-1133">Transmembrane helix</keyword>
<accession>Q9JJG7</accession>
<accession>F8WHE1</accession>
<name>CABP8_MOUSE</name>
<sequence length="261" mass="29625">MRLPEQPGDGKPENETKGDQETPERGEEPRRSPAPDFPTWEKMPFHHVTAGLLYKGNYLNRSLSAGSDSEQLANISVEELDEIREAFRVLDRDGNGFISKQELGMAMRSLGYMPSEVELAIIMQRLDMDGDGQVDFDEFMTILGPKLVSSEGRDGFLGNTIDSIFWQFDMQRVTLEELKHILYHAFRDHLTMKDIENIIINEEESLNETSGNCQTEFEGVHSQKQNRQTCVRKSLICAFAMAFIISVMLIAANQILRSGME</sequence>
<proteinExistence type="evidence at transcript level"/>
<gene>
    <name type="primary">Caln1</name>
    <name type="synonym">Cabp8</name>
    <name type="ORF">MNCb-0849</name>
</gene>
<organism>
    <name type="scientific">Mus musculus</name>
    <name type="common">Mouse</name>
    <dbReference type="NCBI Taxonomy" id="10090"/>
    <lineage>
        <taxon>Eukaryota</taxon>
        <taxon>Metazoa</taxon>
        <taxon>Chordata</taxon>
        <taxon>Craniata</taxon>
        <taxon>Vertebrata</taxon>
        <taxon>Euteleostomi</taxon>
        <taxon>Mammalia</taxon>
        <taxon>Eutheria</taxon>
        <taxon>Euarchontoglires</taxon>
        <taxon>Glires</taxon>
        <taxon>Rodentia</taxon>
        <taxon>Myomorpha</taxon>
        <taxon>Muroidea</taxon>
        <taxon>Muridae</taxon>
        <taxon>Murinae</taxon>
        <taxon>Mus</taxon>
        <taxon>Mus</taxon>
    </lineage>
</organism>
<reference key="1">
    <citation type="journal article" date="2001" name="Mol. Genet. Metab.">
        <title>Identification of a human brain-specific gene, calneuron 1, a new member of the calmodulin superfamily.</title>
        <authorList>
            <person name="Wu Y.-Q."/>
            <person name="Lin X."/>
            <person name="Liu C.-M."/>
            <person name="Jamrich M."/>
            <person name="Shaffer L.G."/>
        </authorList>
    </citation>
    <scope>NUCLEOTIDE SEQUENCE [MRNA] (ISOFORM 1)</scope>
    <source>
        <strain>C57BL/6J</strain>
        <tissue>Brain</tissue>
    </source>
</reference>
<reference key="2">
    <citation type="submission" date="2000-04" db="EMBL/GenBank/DDBJ databases">
        <title>Isolation of full-length cDNA clones from mouse brain cDNA library made by oligo-capping method.</title>
        <authorList>
            <person name="Osada N."/>
            <person name="Kusuda J."/>
            <person name="Tanuma R."/>
            <person name="Ito A."/>
            <person name="Hirata M."/>
            <person name="Sugano S."/>
            <person name="Hashimoto K."/>
        </authorList>
    </citation>
    <scope>NUCLEOTIDE SEQUENCE [LARGE SCALE MRNA] (ISOFORM 2)</scope>
    <source>
        <strain>C57BL/6J</strain>
        <tissue>Brain</tissue>
    </source>
</reference>
<reference key="3">
    <citation type="journal article" date="2009" name="PLoS Biol.">
        <title>Lineage-specific biology revealed by a finished genome assembly of the mouse.</title>
        <authorList>
            <person name="Church D.M."/>
            <person name="Goodstadt L."/>
            <person name="Hillier L.W."/>
            <person name="Zody M.C."/>
            <person name="Goldstein S."/>
            <person name="She X."/>
            <person name="Bult C.J."/>
            <person name="Agarwala R."/>
            <person name="Cherry J.L."/>
            <person name="DiCuccio M."/>
            <person name="Hlavina W."/>
            <person name="Kapustin Y."/>
            <person name="Meric P."/>
            <person name="Maglott D."/>
            <person name="Birtle Z."/>
            <person name="Marques A.C."/>
            <person name="Graves T."/>
            <person name="Zhou S."/>
            <person name="Teague B."/>
            <person name="Potamousis K."/>
            <person name="Churas C."/>
            <person name="Place M."/>
            <person name="Herschleb J."/>
            <person name="Runnheim R."/>
            <person name="Forrest D."/>
            <person name="Amos-Landgraf J."/>
            <person name="Schwartz D.C."/>
            <person name="Cheng Z."/>
            <person name="Lindblad-Toh K."/>
            <person name="Eichler E.E."/>
            <person name="Ponting C.P."/>
        </authorList>
    </citation>
    <scope>NUCLEOTIDE SEQUENCE [LARGE SCALE GENOMIC DNA]</scope>
    <source>
        <strain>C57BL/6J</strain>
    </source>
</reference>
<reference key="4">
    <citation type="journal article" date="2004" name="Genome Res.">
        <title>The status, quality, and expansion of the NIH full-length cDNA project: the Mammalian Gene Collection (MGC).</title>
        <authorList>
            <consortium name="The MGC Project Team"/>
        </authorList>
    </citation>
    <scope>NUCLEOTIDE SEQUENCE [LARGE SCALE MRNA] (ISOFORM 2)</scope>
    <source>
        <strain>C57BL/6J</strain>
        <tissue>Brain</tissue>
    </source>
</reference>
<comment type="function">
    <text evidence="1">Negatively regulates Golgi-to-plasma membrane trafficking by interacting with PI4KB and inhibiting its activity. May play a role in the physiology of neurons and is potentially important in memory and learning.</text>
</comment>
<comment type="subunit">
    <text evidence="1">Interacts with PI4KB. This binding competes with FREQ/NCS1 binding in a calcium-dependent manner.</text>
</comment>
<comment type="subcellular location">
    <subcellularLocation>
        <location evidence="2">Golgi apparatus</location>
        <location evidence="2">trans-Golgi network membrane</location>
        <topology evidence="3">Single-pass type IV membrane protein</topology>
    </subcellularLocation>
    <subcellularLocation>
        <location evidence="2">Cytoplasm</location>
        <location evidence="2">Perinuclear region</location>
    </subcellularLocation>
    <subcellularLocation>
        <location evidence="2">Cell membrane</location>
        <topology evidence="3">Single-pass type IV membrane protein</topology>
    </subcellularLocation>
</comment>
<comment type="alternative products">
    <event type="alternative splicing"/>
    <isoform>
        <id>Q9JJG7-1</id>
        <name>1</name>
        <sequence type="displayed"/>
    </isoform>
    <isoform>
        <id>Q9JJG7-2</id>
        <name>2</name>
        <sequence type="described" ref="VSP_060874"/>
    </isoform>
</comment>
<comment type="tissue specificity">
    <text>Brain-specific. High expression in the cerebellum, hippocampus, and cortex.</text>
</comment>
<comment type="developmental stage">
    <text>Shows little prenatal expression, with highest expression at postnatal day 21.</text>
</comment>
<comment type="domain">
    <text evidence="2">The C-terminal transmembrane domain (TMD) is necessary and sufficient for membrane targeting.</text>
</comment>
<comment type="sequence caution" evidence="6">
    <conflict type="erroneous initiation">
        <sequence resource="EMBL-CDS" id="AAK15156"/>
    </conflict>
    <text>Truncated N-terminus.</text>
</comment>
<feature type="chain" id="PRO_0000073530" description="Calcium-binding protein 8">
    <location>
        <begin position="1"/>
        <end position="261"/>
    </location>
</feature>
<feature type="topological domain" description="Cytoplasmic" evidence="3">
    <location>
        <begin position="1"/>
        <end position="234"/>
    </location>
</feature>
<feature type="transmembrane region" description="Helical; Anchor for type IV membrane protein" evidence="3">
    <location>
        <begin position="235"/>
        <end position="255"/>
    </location>
</feature>
<feature type="topological domain" description="Extracellular" evidence="3">
    <location>
        <begin position="256"/>
        <end position="261"/>
    </location>
</feature>
<feature type="domain" description="EF-hand 1" evidence="4">
    <location>
        <begin position="78"/>
        <end position="113"/>
    </location>
</feature>
<feature type="domain" description="EF-hand 2" evidence="4">
    <location>
        <begin position="114"/>
        <end position="149"/>
    </location>
</feature>
<feature type="region of interest" description="Disordered" evidence="5">
    <location>
        <begin position="1"/>
        <end position="41"/>
    </location>
</feature>
<feature type="compositionally biased region" description="Basic and acidic residues" evidence="5">
    <location>
        <begin position="8"/>
        <end position="33"/>
    </location>
</feature>
<feature type="binding site" evidence="4">
    <location>
        <position position="91"/>
    </location>
    <ligand>
        <name>Ca(2+)</name>
        <dbReference type="ChEBI" id="CHEBI:29108"/>
        <label>1</label>
    </ligand>
</feature>
<feature type="binding site" evidence="4">
    <location>
        <position position="93"/>
    </location>
    <ligand>
        <name>Ca(2+)</name>
        <dbReference type="ChEBI" id="CHEBI:29108"/>
        <label>1</label>
    </ligand>
</feature>
<feature type="binding site" evidence="4">
    <location>
        <position position="95"/>
    </location>
    <ligand>
        <name>Ca(2+)</name>
        <dbReference type="ChEBI" id="CHEBI:29108"/>
        <label>1</label>
    </ligand>
</feature>
<feature type="binding site" evidence="4">
    <location>
        <position position="102"/>
    </location>
    <ligand>
        <name>Ca(2+)</name>
        <dbReference type="ChEBI" id="CHEBI:29108"/>
        <label>1</label>
    </ligand>
</feature>
<feature type="binding site" evidence="4">
    <location>
        <position position="127"/>
    </location>
    <ligand>
        <name>Ca(2+)</name>
        <dbReference type="ChEBI" id="CHEBI:29108"/>
        <label>2</label>
    </ligand>
</feature>
<feature type="binding site" evidence="4">
    <location>
        <position position="129"/>
    </location>
    <ligand>
        <name>Ca(2+)</name>
        <dbReference type="ChEBI" id="CHEBI:29108"/>
        <label>2</label>
    </ligand>
</feature>
<feature type="binding site" evidence="4">
    <location>
        <position position="131"/>
    </location>
    <ligand>
        <name>Ca(2+)</name>
        <dbReference type="ChEBI" id="CHEBI:29108"/>
        <label>2</label>
    </ligand>
</feature>
<feature type="binding site" evidence="4">
    <location>
        <position position="133"/>
    </location>
    <ligand>
        <name>Ca(2+)</name>
        <dbReference type="ChEBI" id="CHEBI:29108"/>
        <label>2</label>
    </ligand>
</feature>
<feature type="binding site" evidence="4">
    <location>
        <position position="138"/>
    </location>
    <ligand>
        <name>Ca(2+)</name>
        <dbReference type="ChEBI" id="CHEBI:29108"/>
        <label>2</label>
    </ligand>
</feature>
<feature type="splice variant" id="VSP_060874" description="In isoform 2." evidence="6">
    <location>
        <begin position="1"/>
        <end position="42"/>
    </location>
</feature>
<protein>
    <recommendedName>
        <fullName>Calcium-binding protein 8</fullName>
        <shortName>CaBP8</shortName>
    </recommendedName>
    <alternativeName>
        <fullName>Calneuron I</fullName>
    </alternativeName>
    <alternativeName>
        <fullName>Calneuron-1</fullName>
    </alternativeName>
</protein>